<accession>Q6L0J9</accession>
<comment type="function">
    <text evidence="1">Catalyzes the NADPH-dependent reduction of glutamyl-tRNA(Glu) to glutamate 1-semialdehyde (GSA).</text>
</comment>
<comment type="catalytic activity">
    <reaction evidence="1">
        <text>(S)-4-amino-5-oxopentanoate + tRNA(Glu) + NADP(+) = L-glutamyl-tRNA(Glu) + NADPH + H(+)</text>
        <dbReference type="Rhea" id="RHEA:12344"/>
        <dbReference type="Rhea" id="RHEA-COMP:9663"/>
        <dbReference type="Rhea" id="RHEA-COMP:9680"/>
        <dbReference type="ChEBI" id="CHEBI:15378"/>
        <dbReference type="ChEBI" id="CHEBI:57501"/>
        <dbReference type="ChEBI" id="CHEBI:57783"/>
        <dbReference type="ChEBI" id="CHEBI:58349"/>
        <dbReference type="ChEBI" id="CHEBI:78442"/>
        <dbReference type="ChEBI" id="CHEBI:78520"/>
        <dbReference type="EC" id="1.2.1.70"/>
    </reaction>
</comment>
<comment type="pathway">
    <text evidence="1">Porphyrin-containing compound metabolism; protoporphyrin-IX biosynthesis; 5-aminolevulinate from L-glutamyl-tRNA(Glu): step 1/2.</text>
</comment>
<comment type="subunit">
    <text evidence="1">Homodimer.</text>
</comment>
<comment type="domain">
    <text evidence="1">Possesses an unusual extended V-shaped dimeric structure with each monomer consisting of three distinct domains arranged along a curved 'spinal' alpha-helix. The N-terminal catalytic domain specifically recognizes the glutamate moiety of the substrate. The second domain is the NADPH-binding domain, and the third C-terminal domain is responsible for dimerization.</text>
</comment>
<comment type="miscellaneous">
    <text evidence="1">During catalysis, the active site Cys acts as a nucleophile attacking the alpha-carbonyl group of tRNA-bound glutamate with the formation of a thioester intermediate between enzyme and glutamate, and the concomitant release of tRNA(Glu). The thioester intermediate is finally reduced by direct hydride transfer from NADPH, to form the product GSA.</text>
</comment>
<comment type="similarity">
    <text evidence="1">Belongs to the glutamyl-tRNA reductase family.</text>
</comment>
<keyword id="KW-0521">NADP</keyword>
<keyword id="KW-0560">Oxidoreductase</keyword>
<keyword id="KW-0627">Porphyrin biosynthesis</keyword>
<organism>
    <name type="scientific">Picrophilus torridus (strain ATCC 700027 / DSM 9790 / JCM 10055 / NBRC 100828 / KAW 2/3)</name>
    <dbReference type="NCBI Taxonomy" id="1122961"/>
    <lineage>
        <taxon>Archaea</taxon>
        <taxon>Methanobacteriati</taxon>
        <taxon>Thermoplasmatota</taxon>
        <taxon>Thermoplasmata</taxon>
        <taxon>Thermoplasmatales</taxon>
        <taxon>Picrophilaceae</taxon>
        <taxon>Picrophilus</taxon>
    </lineage>
</organism>
<gene>
    <name evidence="1" type="primary">hemA</name>
    <name type="ordered locus">PTO0918</name>
</gene>
<dbReference type="EC" id="1.2.1.70" evidence="1"/>
<dbReference type="EMBL" id="AE017261">
    <property type="protein sequence ID" value="AAT43503.1"/>
    <property type="molecule type" value="Genomic_DNA"/>
</dbReference>
<dbReference type="SMR" id="Q6L0J9"/>
<dbReference type="FunCoup" id="Q6L0J9">
    <property type="interactions" value="69"/>
</dbReference>
<dbReference type="STRING" id="263820.PTO0918"/>
<dbReference type="PaxDb" id="263820-PTO0918"/>
<dbReference type="KEGG" id="pto:PTO0918"/>
<dbReference type="eggNOG" id="arCOG01036">
    <property type="taxonomic scope" value="Archaea"/>
</dbReference>
<dbReference type="HOGENOM" id="CLU_035113_2_2_2"/>
<dbReference type="InParanoid" id="Q6L0J9"/>
<dbReference type="UniPathway" id="UPA00251">
    <property type="reaction ID" value="UER00316"/>
</dbReference>
<dbReference type="Proteomes" id="UP000000438">
    <property type="component" value="Chromosome"/>
</dbReference>
<dbReference type="GO" id="GO:0008883">
    <property type="term" value="F:glutamyl-tRNA reductase activity"/>
    <property type="evidence" value="ECO:0007669"/>
    <property type="project" value="UniProtKB-UniRule"/>
</dbReference>
<dbReference type="GO" id="GO:0050661">
    <property type="term" value="F:NADP binding"/>
    <property type="evidence" value="ECO:0007669"/>
    <property type="project" value="InterPro"/>
</dbReference>
<dbReference type="GO" id="GO:0019353">
    <property type="term" value="P:protoporphyrinogen IX biosynthetic process from glutamate"/>
    <property type="evidence" value="ECO:0007669"/>
    <property type="project" value="TreeGrafter"/>
</dbReference>
<dbReference type="Gene3D" id="3.30.460.30">
    <property type="entry name" value="Glutamyl-tRNA reductase, N-terminal domain"/>
    <property type="match status" value="1"/>
</dbReference>
<dbReference type="Gene3D" id="3.40.50.720">
    <property type="entry name" value="NAD(P)-binding Rossmann-like Domain"/>
    <property type="match status" value="1"/>
</dbReference>
<dbReference type="HAMAP" id="MF_00087">
    <property type="entry name" value="Glu_tRNA_reductase"/>
    <property type="match status" value="1"/>
</dbReference>
<dbReference type="InterPro" id="IPR000343">
    <property type="entry name" value="4pyrrol_synth_GluRdtase"/>
</dbReference>
<dbReference type="InterPro" id="IPR015896">
    <property type="entry name" value="4pyrrol_synth_GluRdtase_dimer"/>
</dbReference>
<dbReference type="InterPro" id="IPR015895">
    <property type="entry name" value="4pyrrol_synth_GluRdtase_N"/>
</dbReference>
<dbReference type="InterPro" id="IPR018214">
    <property type="entry name" value="GluRdtase_CS"/>
</dbReference>
<dbReference type="InterPro" id="IPR036453">
    <property type="entry name" value="GluRdtase_dimer_dom_sf"/>
</dbReference>
<dbReference type="InterPro" id="IPR036343">
    <property type="entry name" value="GluRdtase_N_sf"/>
</dbReference>
<dbReference type="InterPro" id="IPR036291">
    <property type="entry name" value="NAD(P)-bd_dom_sf"/>
</dbReference>
<dbReference type="InterPro" id="IPR006151">
    <property type="entry name" value="Shikm_DH/Glu-tRNA_Rdtase"/>
</dbReference>
<dbReference type="NCBIfam" id="TIGR01035">
    <property type="entry name" value="hemA"/>
    <property type="match status" value="1"/>
</dbReference>
<dbReference type="PANTHER" id="PTHR43013">
    <property type="entry name" value="GLUTAMYL-TRNA REDUCTASE"/>
    <property type="match status" value="1"/>
</dbReference>
<dbReference type="PANTHER" id="PTHR43013:SF1">
    <property type="entry name" value="GLUTAMYL-TRNA REDUCTASE"/>
    <property type="match status" value="1"/>
</dbReference>
<dbReference type="Pfam" id="PF00745">
    <property type="entry name" value="GlutR_dimer"/>
    <property type="match status" value="1"/>
</dbReference>
<dbReference type="Pfam" id="PF05201">
    <property type="entry name" value="GlutR_N"/>
    <property type="match status" value="1"/>
</dbReference>
<dbReference type="Pfam" id="PF01488">
    <property type="entry name" value="Shikimate_DH"/>
    <property type="match status" value="1"/>
</dbReference>
<dbReference type="PIRSF" id="PIRSF000445">
    <property type="entry name" value="4pyrrol_synth_GluRdtase"/>
    <property type="match status" value="1"/>
</dbReference>
<dbReference type="SUPFAM" id="SSF69742">
    <property type="entry name" value="Glutamyl tRNA-reductase catalytic, N-terminal domain"/>
    <property type="match status" value="1"/>
</dbReference>
<dbReference type="SUPFAM" id="SSF69075">
    <property type="entry name" value="Glutamyl tRNA-reductase dimerization domain"/>
    <property type="match status" value="1"/>
</dbReference>
<dbReference type="SUPFAM" id="SSF51735">
    <property type="entry name" value="NAD(P)-binding Rossmann-fold domains"/>
    <property type="match status" value="1"/>
</dbReference>
<dbReference type="PROSITE" id="PS00747">
    <property type="entry name" value="GLUTR"/>
    <property type="match status" value="1"/>
</dbReference>
<proteinExistence type="inferred from homology"/>
<protein>
    <recommendedName>
        <fullName evidence="1">Glutamyl-tRNA reductase</fullName>
        <shortName evidence="1">GluTR</shortName>
        <ecNumber evidence="1">1.2.1.70</ecNumber>
    </recommendedName>
</protein>
<feature type="chain" id="PRO_0000114107" description="Glutamyl-tRNA reductase">
    <location>
        <begin position="1"/>
        <end position="401"/>
    </location>
</feature>
<feature type="active site" description="Nucleophile" evidence="1">
    <location>
        <position position="50"/>
    </location>
</feature>
<feature type="binding site" evidence="1">
    <location>
        <begin position="49"/>
        <end position="52"/>
    </location>
    <ligand>
        <name>substrate</name>
    </ligand>
</feature>
<feature type="binding site" evidence="1">
    <location>
        <position position="92"/>
    </location>
    <ligand>
        <name>substrate</name>
    </ligand>
</feature>
<feature type="binding site" evidence="1">
    <location>
        <begin position="97"/>
        <end position="99"/>
    </location>
    <ligand>
        <name>substrate</name>
    </ligand>
</feature>
<feature type="binding site" evidence="1">
    <location>
        <position position="103"/>
    </location>
    <ligand>
        <name>substrate</name>
    </ligand>
</feature>
<feature type="binding site" evidence="1">
    <location>
        <begin position="171"/>
        <end position="176"/>
    </location>
    <ligand>
        <name>NADP(+)</name>
        <dbReference type="ChEBI" id="CHEBI:58349"/>
    </ligand>
</feature>
<feature type="site" description="Important for activity" evidence="1">
    <location>
        <position position="82"/>
    </location>
</feature>
<evidence type="ECO:0000255" key="1">
    <source>
        <dbReference type="HAMAP-Rule" id="MF_00087"/>
    </source>
</evidence>
<name>HEM1_PICTO</name>
<reference key="1">
    <citation type="journal article" date="2004" name="Proc. Natl. Acad. Sci. U.S.A.">
        <title>Genome sequence of Picrophilus torridus and its implications for life around pH 0.</title>
        <authorList>
            <person name="Fuetterer O."/>
            <person name="Angelov A."/>
            <person name="Liesegang H."/>
            <person name="Gottschalk G."/>
            <person name="Schleper C."/>
            <person name="Schepers B."/>
            <person name="Dock C."/>
            <person name="Antranikian G."/>
            <person name="Liebl W."/>
        </authorList>
    </citation>
    <scope>NUCLEOTIDE SEQUENCE [LARGE SCALE GENOMIC DNA]</scope>
    <source>
        <strain>ATCC 700027 / DSM 9790 / JCM 10055 / NBRC 100828 / KAW 2/3</strain>
    </source>
</reference>
<sequence length="401" mass="46302">MIIMIPIYAITWNFRDTPEGFDKIVNNDYNYFESLCKKSSIDEFVILITCNRVEIYAYTRNEIDKDLFKDSLIYNYPESTMHLLRVASGLESMSIGENDIMRQVKEAYELSIKRKTSGKILSYIFKKALNVGKEVRTQTSISRGKTSIPAISLDICDNEYGINNKSILIIGNGKMATDFSRYLKEYRPGNVTIAGRSIDHARNLAVLYGYSYDSIKNLNNLIKNSDIIIAATSAGNYIVKDLGDLARNKYFIDISKPENIDPEISKYARLLSINEIGKILKRNEDEKKGEVEIAEVIINQEQKTIDEKLKEMMLDDVIAMFYKFANNVKKDELEELFLIQDFNDEQKKDIDAMTSSLINKILAPYTNSVKQFIKENKNFDYILNEYKKMLEQFMENIVKKL</sequence>